<gene>
    <name evidence="1" type="primary">fabZ</name>
    <name type="ordered locus">SUN_1112</name>
</gene>
<organism>
    <name type="scientific">Sulfurovum sp. (strain NBC37-1)</name>
    <dbReference type="NCBI Taxonomy" id="387093"/>
    <lineage>
        <taxon>Bacteria</taxon>
        <taxon>Pseudomonadati</taxon>
        <taxon>Campylobacterota</taxon>
        <taxon>Epsilonproteobacteria</taxon>
        <taxon>Campylobacterales</taxon>
        <taxon>Sulfurovaceae</taxon>
        <taxon>Sulfurovum</taxon>
    </lineage>
</organism>
<protein>
    <recommendedName>
        <fullName evidence="1">3-hydroxyacyl-[acyl-carrier-protein] dehydratase FabZ</fullName>
        <ecNumber evidence="1">4.2.1.59</ecNumber>
    </recommendedName>
    <alternativeName>
        <fullName evidence="1">(3R)-hydroxymyristoyl-[acyl-carrier-protein] dehydratase</fullName>
        <shortName evidence="1">(3R)-hydroxymyristoyl-ACP dehydrase</shortName>
    </alternativeName>
    <alternativeName>
        <fullName evidence="1">Beta-hydroxyacyl-ACP dehydratase</fullName>
    </alternativeName>
</protein>
<proteinExistence type="inferred from homology"/>
<sequence>MVFNVVEIQKILPHRYPFLLVDRITHLEKGSYIEGYKNVSISEPVFQGHFPDHPIYPGVMIIEGMAQAGGVLAFESMDNATQEEIANKVVYFMSIDKAKFRSPVTPGDQLVYKLNVIKNKGAIWQLDAKAYVDDKLVAEAELKAMIVDK</sequence>
<comment type="function">
    <text evidence="1">Involved in unsaturated fatty acids biosynthesis. Catalyzes the dehydration of short chain beta-hydroxyacyl-ACPs and long chain saturated and unsaturated beta-hydroxyacyl-ACPs.</text>
</comment>
<comment type="catalytic activity">
    <reaction evidence="1">
        <text>a (3R)-hydroxyacyl-[ACP] = a (2E)-enoyl-[ACP] + H2O</text>
        <dbReference type="Rhea" id="RHEA:13097"/>
        <dbReference type="Rhea" id="RHEA-COMP:9925"/>
        <dbReference type="Rhea" id="RHEA-COMP:9945"/>
        <dbReference type="ChEBI" id="CHEBI:15377"/>
        <dbReference type="ChEBI" id="CHEBI:78784"/>
        <dbReference type="ChEBI" id="CHEBI:78827"/>
        <dbReference type="EC" id="4.2.1.59"/>
    </reaction>
</comment>
<comment type="subcellular location">
    <subcellularLocation>
        <location evidence="1">Cytoplasm</location>
    </subcellularLocation>
</comment>
<comment type="similarity">
    <text evidence="1">Belongs to the thioester dehydratase family. FabZ subfamily.</text>
</comment>
<feature type="chain" id="PRO_1000049864" description="3-hydroxyacyl-[acyl-carrier-protein] dehydratase FabZ">
    <location>
        <begin position="1"/>
        <end position="149"/>
    </location>
</feature>
<feature type="active site" evidence="1">
    <location>
        <position position="49"/>
    </location>
</feature>
<accession>A6Q9A8</accession>
<reference key="1">
    <citation type="journal article" date="2007" name="Proc. Natl. Acad. Sci. U.S.A.">
        <title>Deep-sea vent epsilon-proteobacterial genomes provide insights into emergence of pathogens.</title>
        <authorList>
            <person name="Nakagawa S."/>
            <person name="Takaki Y."/>
            <person name="Shimamura S."/>
            <person name="Reysenbach A.-L."/>
            <person name="Takai K."/>
            <person name="Horikoshi K."/>
        </authorList>
    </citation>
    <scope>NUCLEOTIDE SEQUENCE [LARGE SCALE GENOMIC DNA]</scope>
    <source>
        <strain>NBC37-1</strain>
    </source>
</reference>
<name>FABZ_SULNB</name>
<evidence type="ECO:0000255" key="1">
    <source>
        <dbReference type="HAMAP-Rule" id="MF_00406"/>
    </source>
</evidence>
<dbReference type="EC" id="4.2.1.59" evidence="1"/>
<dbReference type="EMBL" id="AP009179">
    <property type="protein sequence ID" value="BAF72067.1"/>
    <property type="molecule type" value="Genomic_DNA"/>
</dbReference>
<dbReference type="RefSeq" id="WP_011980800.1">
    <property type="nucleotide sequence ID" value="NC_009663.1"/>
</dbReference>
<dbReference type="SMR" id="A6Q9A8"/>
<dbReference type="STRING" id="387093.SUN_1112"/>
<dbReference type="KEGG" id="sun:SUN_1112"/>
<dbReference type="eggNOG" id="COG0764">
    <property type="taxonomic scope" value="Bacteria"/>
</dbReference>
<dbReference type="HOGENOM" id="CLU_078912_1_2_7"/>
<dbReference type="OrthoDB" id="9772788at2"/>
<dbReference type="Proteomes" id="UP000006378">
    <property type="component" value="Chromosome"/>
</dbReference>
<dbReference type="GO" id="GO:0005737">
    <property type="term" value="C:cytoplasm"/>
    <property type="evidence" value="ECO:0007669"/>
    <property type="project" value="UniProtKB-SubCell"/>
</dbReference>
<dbReference type="GO" id="GO:0016020">
    <property type="term" value="C:membrane"/>
    <property type="evidence" value="ECO:0007669"/>
    <property type="project" value="GOC"/>
</dbReference>
<dbReference type="GO" id="GO:0019171">
    <property type="term" value="F:(3R)-hydroxyacyl-[acyl-carrier-protein] dehydratase activity"/>
    <property type="evidence" value="ECO:0007669"/>
    <property type="project" value="UniProtKB-EC"/>
</dbReference>
<dbReference type="GO" id="GO:0006633">
    <property type="term" value="P:fatty acid biosynthetic process"/>
    <property type="evidence" value="ECO:0007669"/>
    <property type="project" value="UniProtKB-UniRule"/>
</dbReference>
<dbReference type="GO" id="GO:0009245">
    <property type="term" value="P:lipid A biosynthetic process"/>
    <property type="evidence" value="ECO:0007669"/>
    <property type="project" value="UniProtKB-UniRule"/>
</dbReference>
<dbReference type="CDD" id="cd01288">
    <property type="entry name" value="FabZ"/>
    <property type="match status" value="1"/>
</dbReference>
<dbReference type="FunFam" id="3.10.129.10:FF:000001">
    <property type="entry name" value="3-hydroxyacyl-[acyl-carrier-protein] dehydratase FabZ"/>
    <property type="match status" value="1"/>
</dbReference>
<dbReference type="Gene3D" id="3.10.129.10">
    <property type="entry name" value="Hotdog Thioesterase"/>
    <property type="match status" value="1"/>
</dbReference>
<dbReference type="HAMAP" id="MF_00406">
    <property type="entry name" value="FabZ"/>
    <property type="match status" value="1"/>
</dbReference>
<dbReference type="InterPro" id="IPR013114">
    <property type="entry name" value="FabA_FabZ"/>
</dbReference>
<dbReference type="InterPro" id="IPR010084">
    <property type="entry name" value="FabZ"/>
</dbReference>
<dbReference type="InterPro" id="IPR029069">
    <property type="entry name" value="HotDog_dom_sf"/>
</dbReference>
<dbReference type="NCBIfam" id="TIGR01750">
    <property type="entry name" value="fabZ"/>
    <property type="match status" value="1"/>
</dbReference>
<dbReference type="NCBIfam" id="NF000582">
    <property type="entry name" value="PRK00006.1"/>
    <property type="match status" value="1"/>
</dbReference>
<dbReference type="PANTHER" id="PTHR30272">
    <property type="entry name" value="3-HYDROXYACYL-[ACYL-CARRIER-PROTEIN] DEHYDRATASE"/>
    <property type="match status" value="1"/>
</dbReference>
<dbReference type="PANTHER" id="PTHR30272:SF1">
    <property type="entry name" value="3-HYDROXYACYL-[ACYL-CARRIER-PROTEIN] DEHYDRATASE"/>
    <property type="match status" value="1"/>
</dbReference>
<dbReference type="Pfam" id="PF07977">
    <property type="entry name" value="FabA"/>
    <property type="match status" value="1"/>
</dbReference>
<dbReference type="SUPFAM" id="SSF54637">
    <property type="entry name" value="Thioesterase/thiol ester dehydrase-isomerase"/>
    <property type="match status" value="1"/>
</dbReference>
<keyword id="KW-0963">Cytoplasm</keyword>
<keyword id="KW-0441">Lipid A biosynthesis</keyword>
<keyword id="KW-0444">Lipid biosynthesis</keyword>
<keyword id="KW-0443">Lipid metabolism</keyword>
<keyword id="KW-0456">Lyase</keyword>